<accession>B1JV36</accession>
<organism>
    <name type="scientific">Burkholderia orbicola (strain MC0-3)</name>
    <dbReference type="NCBI Taxonomy" id="406425"/>
    <lineage>
        <taxon>Bacteria</taxon>
        <taxon>Pseudomonadati</taxon>
        <taxon>Pseudomonadota</taxon>
        <taxon>Betaproteobacteria</taxon>
        <taxon>Burkholderiales</taxon>
        <taxon>Burkholderiaceae</taxon>
        <taxon>Burkholderia</taxon>
        <taxon>Burkholderia cepacia complex</taxon>
        <taxon>Burkholderia orbicola</taxon>
    </lineage>
</organism>
<feature type="chain" id="PRO_1000131829" description="Probable Fe(2+)-trafficking protein">
    <location>
        <begin position="1"/>
        <end position="91"/>
    </location>
</feature>
<keyword id="KW-0408">Iron</keyword>
<name>FETP_BURO0</name>
<proteinExistence type="inferred from homology"/>
<sequence>MARMIQCAKLGKEAEGLDFPPLPGELGKRIYESVSKEAWQGWLKQQTMLINENRLNMADPRARQYLMKQTEKYFFGDGADQASGYVPPTEG</sequence>
<evidence type="ECO:0000255" key="1">
    <source>
        <dbReference type="HAMAP-Rule" id="MF_00686"/>
    </source>
</evidence>
<gene>
    <name type="ordered locus">Bcenmc03_2175</name>
</gene>
<comment type="function">
    <text evidence="1">Could be a mediator in iron transactions between iron acquisition and iron-requiring processes, such as synthesis and/or repair of Fe-S clusters in biosynthetic enzymes.</text>
</comment>
<comment type="similarity">
    <text evidence="1">Belongs to the Fe(2+)-trafficking protein family.</text>
</comment>
<dbReference type="EMBL" id="CP000958">
    <property type="protein sequence ID" value="ACA91336.1"/>
    <property type="molecule type" value="Genomic_DNA"/>
</dbReference>
<dbReference type="RefSeq" id="WP_006478357.1">
    <property type="nucleotide sequence ID" value="NC_010508.1"/>
</dbReference>
<dbReference type="SMR" id="B1JV36"/>
<dbReference type="KEGG" id="bcm:Bcenmc03_2175"/>
<dbReference type="HOGENOM" id="CLU_170994_0_0_4"/>
<dbReference type="Proteomes" id="UP000002169">
    <property type="component" value="Chromosome 1"/>
</dbReference>
<dbReference type="GO" id="GO:0005829">
    <property type="term" value="C:cytosol"/>
    <property type="evidence" value="ECO:0007669"/>
    <property type="project" value="TreeGrafter"/>
</dbReference>
<dbReference type="GO" id="GO:0005506">
    <property type="term" value="F:iron ion binding"/>
    <property type="evidence" value="ECO:0007669"/>
    <property type="project" value="UniProtKB-UniRule"/>
</dbReference>
<dbReference type="GO" id="GO:0034599">
    <property type="term" value="P:cellular response to oxidative stress"/>
    <property type="evidence" value="ECO:0007669"/>
    <property type="project" value="TreeGrafter"/>
</dbReference>
<dbReference type="FunFam" id="1.10.3880.10:FF:000001">
    <property type="entry name" value="Probable Fe(2+)-trafficking protein"/>
    <property type="match status" value="1"/>
</dbReference>
<dbReference type="Gene3D" id="1.10.3880.10">
    <property type="entry name" value="Fe(II) trafficking protein YggX"/>
    <property type="match status" value="1"/>
</dbReference>
<dbReference type="HAMAP" id="MF_00686">
    <property type="entry name" value="Fe_traffic_YggX"/>
    <property type="match status" value="1"/>
</dbReference>
<dbReference type="InterPro" id="IPR007457">
    <property type="entry name" value="Fe_traffick_prot_YggX"/>
</dbReference>
<dbReference type="InterPro" id="IPR036766">
    <property type="entry name" value="Fe_traffick_prot_YggX_sf"/>
</dbReference>
<dbReference type="NCBIfam" id="NF003817">
    <property type="entry name" value="PRK05408.1"/>
    <property type="match status" value="1"/>
</dbReference>
<dbReference type="PANTHER" id="PTHR36965">
    <property type="entry name" value="FE(2+)-TRAFFICKING PROTEIN-RELATED"/>
    <property type="match status" value="1"/>
</dbReference>
<dbReference type="PANTHER" id="PTHR36965:SF1">
    <property type="entry name" value="FE(2+)-TRAFFICKING PROTEIN-RELATED"/>
    <property type="match status" value="1"/>
</dbReference>
<dbReference type="Pfam" id="PF04362">
    <property type="entry name" value="Iron_traffic"/>
    <property type="match status" value="1"/>
</dbReference>
<dbReference type="PIRSF" id="PIRSF029827">
    <property type="entry name" value="Fe_traffic_YggX"/>
    <property type="match status" value="1"/>
</dbReference>
<dbReference type="SUPFAM" id="SSF111148">
    <property type="entry name" value="YggX-like"/>
    <property type="match status" value="1"/>
</dbReference>
<reference key="1">
    <citation type="submission" date="2008-02" db="EMBL/GenBank/DDBJ databases">
        <title>Complete sequence of chromosome 1 of Burkholderia cenocepacia MC0-3.</title>
        <authorList>
            <person name="Copeland A."/>
            <person name="Lucas S."/>
            <person name="Lapidus A."/>
            <person name="Barry K."/>
            <person name="Bruce D."/>
            <person name="Goodwin L."/>
            <person name="Glavina del Rio T."/>
            <person name="Dalin E."/>
            <person name="Tice H."/>
            <person name="Pitluck S."/>
            <person name="Chain P."/>
            <person name="Malfatti S."/>
            <person name="Shin M."/>
            <person name="Vergez L."/>
            <person name="Schmutz J."/>
            <person name="Larimer F."/>
            <person name="Land M."/>
            <person name="Hauser L."/>
            <person name="Kyrpides N."/>
            <person name="Mikhailova N."/>
            <person name="Tiedje J."/>
            <person name="Richardson P."/>
        </authorList>
    </citation>
    <scope>NUCLEOTIDE SEQUENCE [LARGE SCALE GENOMIC DNA]</scope>
    <source>
        <strain>MC0-3</strain>
    </source>
</reference>
<protein>
    <recommendedName>
        <fullName evidence="1">Probable Fe(2+)-trafficking protein</fullName>
    </recommendedName>
</protein>